<accession>Q4ZVX2</accession>
<sequence length="210" mass="23004">MTGLFITLEGPEGAGKSTNRDYLAAQLRAQGVQVLLTREPGGTPLAERVRELLLAPSDEAMSADTELLLVFAARAQHLAEVIRPALARGEVVLCDRFTDATYAYQGGGRGLSHQRIAALEQFVQGDLRPDLTLVFDLPVEIGLSRAAARGRLDRFEQEGRAFFDAVRSTYLERARAEPARYRLVDAAQTLADVQACLDTLLPQLLELQRG</sequence>
<gene>
    <name evidence="1" type="primary">tmk</name>
    <name type="ordered locus">Psyr_1652</name>
</gene>
<dbReference type="EC" id="2.7.4.9" evidence="1"/>
<dbReference type="EMBL" id="CP000075">
    <property type="protein sequence ID" value="AAY36700.1"/>
    <property type="molecule type" value="Genomic_DNA"/>
</dbReference>
<dbReference type="RefSeq" id="WP_011267153.1">
    <property type="nucleotide sequence ID" value="NC_007005.1"/>
</dbReference>
<dbReference type="RefSeq" id="YP_234738.1">
    <property type="nucleotide sequence ID" value="NC_007005.1"/>
</dbReference>
<dbReference type="SMR" id="Q4ZVX2"/>
<dbReference type="STRING" id="205918.Psyr_1652"/>
<dbReference type="KEGG" id="psb:Psyr_1652"/>
<dbReference type="PATRIC" id="fig|205918.7.peg.1689"/>
<dbReference type="eggNOG" id="COG0125">
    <property type="taxonomic scope" value="Bacteria"/>
</dbReference>
<dbReference type="HOGENOM" id="CLU_049131_0_2_6"/>
<dbReference type="OrthoDB" id="9774907at2"/>
<dbReference type="Proteomes" id="UP000000426">
    <property type="component" value="Chromosome"/>
</dbReference>
<dbReference type="GO" id="GO:0005829">
    <property type="term" value="C:cytosol"/>
    <property type="evidence" value="ECO:0007669"/>
    <property type="project" value="TreeGrafter"/>
</dbReference>
<dbReference type="GO" id="GO:0005524">
    <property type="term" value="F:ATP binding"/>
    <property type="evidence" value="ECO:0007669"/>
    <property type="project" value="UniProtKB-UniRule"/>
</dbReference>
<dbReference type="GO" id="GO:0004798">
    <property type="term" value="F:dTMP kinase activity"/>
    <property type="evidence" value="ECO:0007669"/>
    <property type="project" value="UniProtKB-UniRule"/>
</dbReference>
<dbReference type="GO" id="GO:0006233">
    <property type="term" value="P:dTDP biosynthetic process"/>
    <property type="evidence" value="ECO:0007669"/>
    <property type="project" value="InterPro"/>
</dbReference>
<dbReference type="GO" id="GO:0006235">
    <property type="term" value="P:dTTP biosynthetic process"/>
    <property type="evidence" value="ECO:0007669"/>
    <property type="project" value="UniProtKB-UniRule"/>
</dbReference>
<dbReference type="GO" id="GO:0006227">
    <property type="term" value="P:dUDP biosynthetic process"/>
    <property type="evidence" value="ECO:0007669"/>
    <property type="project" value="TreeGrafter"/>
</dbReference>
<dbReference type="CDD" id="cd01672">
    <property type="entry name" value="TMPK"/>
    <property type="match status" value="1"/>
</dbReference>
<dbReference type="FunFam" id="3.40.50.300:FF:000225">
    <property type="entry name" value="Thymidylate kinase"/>
    <property type="match status" value="1"/>
</dbReference>
<dbReference type="Gene3D" id="3.40.50.300">
    <property type="entry name" value="P-loop containing nucleotide triphosphate hydrolases"/>
    <property type="match status" value="1"/>
</dbReference>
<dbReference type="HAMAP" id="MF_00165">
    <property type="entry name" value="Thymidylate_kinase"/>
    <property type="match status" value="1"/>
</dbReference>
<dbReference type="InterPro" id="IPR027417">
    <property type="entry name" value="P-loop_NTPase"/>
</dbReference>
<dbReference type="InterPro" id="IPR039430">
    <property type="entry name" value="Thymidylate_kin-like_dom"/>
</dbReference>
<dbReference type="InterPro" id="IPR018094">
    <property type="entry name" value="Thymidylate_kinase"/>
</dbReference>
<dbReference type="NCBIfam" id="TIGR00041">
    <property type="entry name" value="DTMP_kinase"/>
    <property type="match status" value="1"/>
</dbReference>
<dbReference type="PANTHER" id="PTHR10344">
    <property type="entry name" value="THYMIDYLATE KINASE"/>
    <property type="match status" value="1"/>
</dbReference>
<dbReference type="PANTHER" id="PTHR10344:SF4">
    <property type="entry name" value="UMP-CMP KINASE 2, MITOCHONDRIAL"/>
    <property type="match status" value="1"/>
</dbReference>
<dbReference type="Pfam" id="PF02223">
    <property type="entry name" value="Thymidylate_kin"/>
    <property type="match status" value="1"/>
</dbReference>
<dbReference type="SUPFAM" id="SSF52540">
    <property type="entry name" value="P-loop containing nucleoside triphosphate hydrolases"/>
    <property type="match status" value="1"/>
</dbReference>
<evidence type="ECO:0000255" key="1">
    <source>
        <dbReference type="HAMAP-Rule" id="MF_00165"/>
    </source>
</evidence>
<feature type="chain" id="PRO_1000023261" description="Thymidylate kinase">
    <location>
        <begin position="1"/>
        <end position="210"/>
    </location>
</feature>
<feature type="binding site" evidence="1">
    <location>
        <begin position="10"/>
        <end position="17"/>
    </location>
    <ligand>
        <name>ATP</name>
        <dbReference type="ChEBI" id="CHEBI:30616"/>
    </ligand>
</feature>
<protein>
    <recommendedName>
        <fullName evidence="1">Thymidylate kinase</fullName>
        <ecNumber evidence="1">2.7.4.9</ecNumber>
    </recommendedName>
    <alternativeName>
        <fullName evidence="1">dTMP kinase</fullName>
    </alternativeName>
</protein>
<proteinExistence type="inferred from homology"/>
<reference key="1">
    <citation type="journal article" date="2005" name="Proc. Natl. Acad. Sci. U.S.A.">
        <title>Comparison of the complete genome sequences of Pseudomonas syringae pv. syringae B728a and pv. tomato DC3000.</title>
        <authorList>
            <person name="Feil H."/>
            <person name="Feil W.S."/>
            <person name="Chain P."/>
            <person name="Larimer F."/>
            <person name="Dibartolo G."/>
            <person name="Copeland A."/>
            <person name="Lykidis A."/>
            <person name="Trong S."/>
            <person name="Nolan M."/>
            <person name="Goltsman E."/>
            <person name="Thiel J."/>
            <person name="Malfatti S."/>
            <person name="Loper J.E."/>
            <person name="Lapidus A."/>
            <person name="Detter J.C."/>
            <person name="Land M."/>
            <person name="Richardson P.M."/>
            <person name="Kyrpides N.C."/>
            <person name="Ivanova N."/>
            <person name="Lindow S.E."/>
        </authorList>
    </citation>
    <scope>NUCLEOTIDE SEQUENCE [LARGE SCALE GENOMIC DNA]</scope>
    <source>
        <strain>B728a</strain>
    </source>
</reference>
<comment type="function">
    <text evidence="1">Phosphorylation of dTMP to form dTDP in both de novo and salvage pathways of dTTP synthesis.</text>
</comment>
<comment type="catalytic activity">
    <reaction evidence="1">
        <text>dTMP + ATP = dTDP + ADP</text>
        <dbReference type="Rhea" id="RHEA:13517"/>
        <dbReference type="ChEBI" id="CHEBI:30616"/>
        <dbReference type="ChEBI" id="CHEBI:58369"/>
        <dbReference type="ChEBI" id="CHEBI:63528"/>
        <dbReference type="ChEBI" id="CHEBI:456216"/>
        <dbReference type="EC" id="2.7.4.9"/>
    </reaction>
</comment>
<comment type="similarity">
    <text evidence="1">Belongs to the thymidylate kinase family.</text>
</comment>
<name>KTHY_PSEU2</name>
<keyword id="KW-0067">ATP-binding</keyword>
<keyword id="KW-0418">Kinase</keyword>
<keyword id="KW-0545">Nucleotide biosynthesis</keyword>
<keyword id="KW-0547">Nucleotide-binding</keyword>
<keyword id="KW-0808">Transferase</keyword>
<organism>
    <name type="scientific">Pseudomonas syringae pv. syringae (strain B728a)</name>
    <dbReference type="NCBI Taxonomy" id="205918"/>
    <lineage>
        <taxon>Bacteria</taxon>
        <taxon>Pseudomonadati</taxon>
        <taxon>Pseudomonadota</taxon>
        <taxon>Gammaproteobacteria</taxon>
        <taxon>Pseudomonadales</taxon>
        <taxon>Pseudomonadaceae</taxon>
        <taxon>Pseudomonas</taxon>
        <taxon>Pseudomonas syringae</taxon>
    </lineage>
</organism>